<feature type="chain" id="PRO_0000072500" description="Protein TFG">
    <location>
        <begin position="1"/>
        <end position="400"/>
    </location>
</feature>
<feature type="domain" description="PB1" evidence="2">
    <location>
        <begin position="10"/>
        <end position="91"/>
    </location>
</feature>
<feature type="region of interest" description="Disordered" evidence="3">
    <location>
        <begin position="120"/>
        <end position="160"/>
    </location>
</feature>
<feature type="region of interest" description="Disordered" evidence="3">
    <location>
        <begin position="187"/>
        <end position="400"/>
    </location>
</feature>
<feature type="coiled-coil region" evidence="1">
    <location>
        <begin position="97"/>
        <end position="124"/>
    </location>
</feature>
<feature type="compositionally biased region" description="Polar residues" evidence="3">
    <location>
        <begin position="150"/>
        <end position="160"/>
    </location>
</feature>
<feature type="compositionally biased region" description="Low complexity" evidence="3">
    <location>
        <begin position="237"/>
        <end position="258"/>
    </location>
</feature>
<feature type="compositionally biased region" description="Low complexity" evidence="3">
    <location>
        <begin position="265"/>
        <end position="298"/>
    </location>
</feature>
<feature type="compositionally biased region" description="Low complexity" evidence="3">
    <location>
        <begin position="307"/>
        <end position="327"/>
    </location>
</feature>
<feature type="compositionally biased region" description="Polar residues" evidence="3">
    <location>
        <begin position="328"/>
        <end position="340"/>
    </location>
</feature>
<feature type="site" description="Breakpoint for translocation to form TRK-T3">
    <location>
        <begin position="193"/>
        <end position="194"/>
    </location>
</feature>
<feature type="modified residue" description="N-acetylmethionine" evidence="12 16 18">
    <location>
        <position position="1"/>
    </location>
</feature>
<feature type="modified residue" description="Phosphoserine" evidence="19">
    <location>
        <position position="50"/>
    </location>
</feature>
<feature type="modified residue" description="Phosphoserine" evidence="15 17 19 21">
    <location>
        <position position="197"/>
    </location>
</feature>
<feature type="modified residue" description="Omega-N-methylarginine" evidence="20">
    <location>
        <position position="385"/>
    </location>
</feature>
<feature type="modified residue" description="Omega-N-methylarginine" evidence="20">
    <location>
        <position position="400"/>
    </location>
</feature>
<feature type="splice variant" id="VSP_047131" description="In isoform 2 and isoform 4." evidence="14">
    <location>
        <begin position="237"/>
        <end position="240"/>
    </location>
</feature>
<feature type="splice variant" id="VSP_057414" description="In isoform 3 and isoform 4." evidence="13">
    <original>ASYSQQTGPQQ</original>
    <variation>GFQSMERFHCK</variation>
    <location>
        <begin position="274"/>
        <end position="284"/>
    </location>
</feature>
<feature type="splice variant" id="VSP_057415" description="In isoform 3 and isoform 4." evidence="13">
    <location>
        <begin position="285"/>
        <end position="400"/>
    </location>
</feature>
<feature type="sequence variant" id="VAR_070986" description="In SPG57; defective self-assembly into an oligomeric complex; impaired interaction with PDCD6; causes mitochondrial fragmentation; dbSNP:rs587777175." evidence="7 8 9">
    <original>R</original>
    <variation>C</variation>
    <location>
        <position position="106"/>
    </location>
</feature>
<feature type="sequence variant" id="VAR_078075" description="In SPG57; causes mitochondrial fragmentation; dbSNP:rs376971794." evidence="8">
    <original>R</original>
    <variation>H</variation>
    <location>
        <position position="106"/>
    </location>
</feature>
<feature type="sequence variant" id="VAR_082155" description="In SPG57; uncertain significance." evidence="10">
    <original>R</original>
    <variation>P</variation>
    <location>
        <position position="107"/>
    </location>
</feature>
<feature type="sequence variant" id="VAR_035668" description="In a colorectal cancer sample; somatic mutation." evidence="4">
    <original>A</original>
    <variation>S</variation>
    <location>
        <position position="149"/>
    </location>
</feature>
<feature type="sequence variant" id="VAR_054322" description="In dbSNP:rs430945.">
    <original>A</original>
    <variation>V</variation>
    <location>
        <position position="211"/>
    </location>
</feature>
<feature type="sequence variant" id="VAR_068917" description="In HMSNO; does not affect interaction with PDCD6; dbSNP:rs207482230." evidence="6 9">
    <original>P</original>
    <variation>L</variation>
    <location>
        <position position="285"/>
    </location>
</feature>
<feature type="sequence variant" id="VAR_054323" description="In dbSNP:rs6772054.">
    <original>T</original>
    <variation>P</variation>
    <location>
        <position position="364"/>
    </location>
</feature>
<feature type="sequence conflict" description="In Ref. 1; CAA69264 and 9; CAA59936." evidence="14" ref="1 9">
    <original>I</original>
    <variation>V</variation>
    <location>
        <position position="13"/>
    </location>
</feature>
<feature type="strand" evidence="23">
    <location>
        <begin position="11"/>
        <end position="17"/>
    </location>
</feature>
<feature type="strand" evidence="23">
    <location>
        <begin position="20"/>
        <end position="26"/>
    </location>
</feature>
<feature type="helix" evidence="23">
    <location>
        <begin position="33"/>
        <end position="43"/>
    </location>
</feature>
<feature type="helix" evidence="23">
    <location>
        <begin position="45"/>
        <end position="47"/>
    </location>
</feature>
<feature type="strand" evidence="23">
    <location>
        <begin position="56"/>
        <end position="59"/>
    </location>
</feature>
<feature type="strand" evidence="23">
    <location>
        <begin position="65"/>
        <end position="68"/>
    </location>
</feature>
<feature type="helix" evidence="23">
    <location>
        <begin position="71"/>
        <end position="79"/>
    </location>
</feature>
<feature type="strand" evidence="22">
    <location>
        <begin position="266"/>
        <end position="274"/>
    </location>
</feature>
<feature type="strand" evidence="22">
    <location>
        <begin position="276"/>
        <end position="279"/>
    </location>
</feature>
<feature type="strand" evidence="22">
    <location>
        <begin position="283"/>
        <end position="293"/>
    </location>
</feature>
<feature type="strand" evidence="22">
    <location>
        <begin position="296"/>
        <end position="298"/>
    </location>
</feature>
<gene>
    <name type="primary">TFG</name>
</gene>
<evidence type="ECO:0000255" key="1"/>
<evidence type="ECO:0000255" key="2">
    <source>
        <dbReference type="PROSITE-ProRule" id="PRU01081"/>
    </source>
</evidence>
<evidence type="ECO:0000256" key="3">
    <source>
        <dbReference type="SAM" id="MobiDB-lite"/>
    </source>
</evidence>
<evidence type="ECO:0000269" key="4">
    <source>
    </source>
</evidence>
<evidence type="ECO:0000269" key="5">
    <source>
    </source>
</evidence>
<evidence type="ECO:0000269" key="6">
    <source>
    </source>
</evidence>
<evidence type="ECO:0000269" key="7">
    <source>
    </source>
</evidence>
<evidence type="ECO:0000269" key="8">
    <source>
    </source>
</evidence>
<evidence type="ECO:0000269" key="9">
    <source>
    </source>
</evidence>
<evidence type="ECO:0000269" key="10">
    <source>
    </source>
</evidence>
<evidence type="ECO:0000269" key="11">
    <source>
    </source>
</evidence>
<evidence type="ECO:0000269" key="12">
    <source ref="10"/>
</evidence>
<evidence type="ECO:0000303" key="13">
    <source>
    </source>
</evidence>
<evidence type="ECO:0000305" key="14"/>
<evidence type="ECO:0007744" key="15">
    <source>
    </source>
</evidence>
<evidence type="ECO:0007744" key="16">
    <source>
    </source>
</evidence>
<evidence type="ECO:0007744" key="17">
    <source>
    </source>
</evidence>
<evidence type="ECO:0007744" key="18">
    <source>
    </source>
</evidence>
<evidence type="ECO:0007744" key="19">
    <source>
    </source>
</evidence>
<evidence type="ECO:0007744" key="20">
    <source>
    </source>
</evidence>
<evidence type="ECO:0007744" key="21">
    <source>
    </source>
</evidence>
<evidence type="ECO:0007829" key="22">
    <source>
        <dbReference type="PDB" id="8TER"/>
    </source>
</evidence>
<evidence type="ECO:0007829" key="23">
    <source>
        <dbReference type="PDB" id="9E7C"/>
    </source>
</evidence>
<comment type="function">
    <text evidence="5 7 9">Plays a role in the normal dynamic function of the endoplasmic reticulum (ER) and its associated microtubules (PubMed:23479643, PubMed:27813252). Required for secretory cargo traffic from the endoplasmic reticulum to the Golgi apparatus (PubMed:21478858).</text>
</comment>
<comment type="subunit">
    <text evidence="5 7 9">Self-associates to form an oligomeric complex (PubMed:23479643). Interacts with PDCD6; promoting localization and polymerization of TFG at endoplasmic reticulum exit site (PubMed:27813252). Interacts with SEC16B (PubMed:21478858).</text>
</comment>
<comment type="interaction">
    <interactant intactId="EBI-357061">
        <id>Q92734</id>
    </interactant>
    <interactant intactId="EBI-11976299">
        <id>Q5BKX5-3</id>
        <label>ACTMAP</label>
    </interactant>
    <organismsDiffer>false</organismsDiffer>
    <experiments>3</experiments>
</comment>
<comment type="interaction">
    <interactant intactId="EBI-357061">
        <id>Q92734</id>
    </interactant>
    <interactant intactId="EBI-715243">
        <id>P50995</id>
        <label>ANXA11</label>
    </interactant>
    <organismsDiffer>false</organismsDiffer>
    <experiments>4</experiments>
</comment>
<comment type="interaction">
    <interactant intactId="EBI-357061">
        <id>Q92734</id>
    </interactant>
    <interactant intactId="EBI-10245225">
        <id>Q5T0G8</id>
        <label>ANXA11</label>
    </interactant>
    <organismsDiffer>false</organismsDiffer>
    <experiments>3</experiments>
</comment>
<comment type="interaction">
    <interactant intactId="EBI-357061">
        <id>Q92734</id>
    </interactant>
    <interactant intactId="EBI-1057448">
        <id>Q5VV41</id>
        <label>ARHGEF16</label>
    </interactant>
    <organismsDiffer>false</organismsDiffer>
    <experiments>3</experiments>
</comment>
<comment type="interaction">
    <interactant intactId="EBI-357061">
        <id>Q92734</id>
    </interactant>
    <interactant intactId="EBI-998198">
        <id>Q8N9W6</id>
        <label>BOLL</label>
    </interactant>
    <organismsDiffer>false</organismsDiffer>
    <experiments>4</experiments>
</comment>
<comment type="interaction">
    <interactant intactId="EBI-357061">
        <id>Q92734</id>
    </interactant>
    <interactant intactId="EBI-11983447">
        <id>Q8N9W6-4</id>
        <label>BOLL</label>
    </interactant>
    <organismsDiffer>false</organismsDiffer>
    <experiments>3</experiments>
</comment>
<comment type="interaction">
    <interactant intactId="EBI-357061">
        <id>Q92734</id>
    </interactant>
    <interactant intactId="EBI-953896">
        <id>Q9NP55</id>
        <label>BPIFA1</label>
    </interactant>
    <organismsDiffer>false</organismsDiffer>
    <experiments>3</experiments>
</comment>
<comment type="interaction">
    <interactant intactId="EBI-357061">
        <id>Q92734</id>
    </interactant>
    <interactant intactId="EBI-747776">
        <id>Q53EZ4</id>
        <label>CEP55</label>
    </interactant>
    <organismsDiffer>false</organismsDiffer>
    <experiments>6</experiments>
</comment>
<comment type="interaction">
    <interactant intactId="EBI-357061">
        <id>Q92734</id>
    </interactant>
    <interactant intactId="EBI-349854">
        <id>P13569</id>
        <label>CFTR</label>
    </interactant>
    <organismsDiffer>false</organismsDiffer>
    <experiments>7</experiments>
</comment>
<comment type="interaction">
    <interactant intactId="EBI-357061">
        <id>Q92734</id>
    </interactant>
    <interactant intactId="EBI-748171">
        <id>O43186</id>
        <label>CRX</label>
    </interactant>
    <organismsDiffer>false</organismsDiffer>
    <experiments>3</experiments>
</comment>
<comment type="interaction">
    <interactant intactId="EBI-357061">
        <id>Q92734</id>
    </interactant>
    <interactant intactId="EBI-711360">
        <id>P33240</id>
        <label>CSTF2</label>
    </interactant>
    <organismsDiffer>false</organismsDiffer>
    <experiments>6</experiments>
</comment>
<comment type="interaction">
    <interactant intactId="EBI-357061">
        <id>Q92734</id>
    </interactant>
    <interactant intactId="EBI-724310">
        <id>Q15038</id>
        <label>DAZAP2</label>
    </interactant>
    <organismsDiffer>false</organismsDiffer>
    <experiments>5</experiments>
</comment>
<comment type="interaction">
    <interactant intactId="EBI-357061">
        <id>Q92734</id>
    </interactant>
    <interactant intactId="EBI-739789">
        <id>Q92997</id>
        <label>DVL3</label>
    </interactant>
    <organismsDiffer>false</organismsDiffer>
    <experiments>3</experiments>
</comment>
<comment type="interaction">
    <interactant intactId="EBI-357061">
        <id>Q92734</id>
    </interactant>
    <interactant intactId="EBI-739737">
        <id>Q01844</id>
        <label>EWSR1</label>
    </interactant>
    <organismsDiffer>false</organismsDiffer>
    <experiments>3</experiments>
</comment>
<comment type="interaction">
    <interactant intactId="EBI-357061">
        <id>Q92734</id>
    </interactant>
    <interactant intactId="EBI-12807776">
        <id>O00167-2</id>
        <label>EYA2</label>
    </interactant>
    <organismsDiffer>false</organismsDiffer>
    <experiments>3</experiments>
</comment>
<comment type="interaction">
    <interactant intactId="EBI-357061">
        <id>Q92734</id>
    </interactant>
    <interactant intactId="EBI-11978259">
        <id>Q92567-2</id>
        <label>FAM168A</label>
    </interactant>
    <organismsDiffer>false</organismsDiffer>
    <experiments>3</experiments>
</comment>
<comment type="interaction">
    <interactant intactId="EBI-357061">
        <id>Q92734</id>
    </interactant>
    <interactant intactId="EBI-1759806">
        <id>O75593</id>
        <label>FOXH1</label>
    </interactant>
    <organismsDiffer>false</organismsDiffer>
    <experiments>3</experiments>
</comment>
<comment type="interaction">
    <interactant intactId="EBI-357061">
        <id>Q92734</id>
    </interactant>
    <interactant intactId="EBI-16429135">
        <id>A0A0S2Z4Q4</id>
        <label>HGS</label>
    </interactant>
    <organismsDiffer>false</organismsDiffer>
    <experiments>3</experiments>
</comment>
<comment type="interaction">
    <interactant intactId="EBI-357061">
        <id>Q92734</id>
    </interactant>
    <interactant intactId="EBI-740220">
        <id>O14964</id>
        <label>HGS</label>
    </interactant>
    <organismsDiffer>false</organismsDiffer>
    <experiments>3</experiments>
</comment>
<comment type="interaction">
    <interactant intactId="EBI-357061">
        <id>Q92734</id>
    </interactant>
    <interactant intactId="EBI-352986">
        <id>P52597</id>
        <label>HNRNPF</label>
    </interactant>
    <organismsDiffer>false</organismsDiffer>
    <experiments>3</experiments>
</comment>
<comment type="interaction">
    <interactant intactId="EBI-357061">
        <id>Q92734</id>
    </interactant>
    <interactant intactId="EBI-466029">
        <id>P42858</id>
        <label>HTT</label>
    </interactant>
    <organismsDiffer>false</organismsDiffer>
    <experiments>3</experiments>
</comment>
<comment type="interaction">
    <interactant intactId="EBI-357061">
        <id>Q92734</id>
    </interactant>
    <interactant intactId="EBI-6509505">
        <id>Q0VD86</id>
        <label>INCA1</label>
    </interactant>
    <organismsDiffer>false</organismsDiffer>
    <experiments>3</experiments>
</comment>
<comment type="interaction">
    <interactant intactId="EBI-357061">
        <id>Q92734</id>
    </interactant>
    <interactant intactId="EBI-748258">
        <id>Q5TA45</id>
        <label>INTS11</label>
    </interactant>
    <organismsDiffer>false</organismsDiffer>
    <experiments>3</experiments>
</comment>
<comment type="interaction">
    <interactant intactId="EBI-357061">
        <id>Q92734</id>
    </interactant>
    <interactant intactId="EBI-3957672">
        <id>Q6PEX3</id>
        <label>KRTAP26-1</label>
    </interactant>
    <organismsDiffer>false</organismsDiffer>
    <experiments>3</experiments>
</comment>
<comment type="interaction">
    <interactant intactId="EBI-357061">
        <id>Q92734</id>
    </interactant>
    <interactant intactId="EBI-9088686">
        <id>Q14847-2</id>
        <label>LASP1</label>
    </interactant>
    <organismsDiffer>false</organismsDiffer>
    <experiments>3</experiments>
</comment>
<comment type="interaction">
    <interactant intactId="EBI-357061">
        <id>Q92734</id>
    </interactant>
    <interactant intactId="EBI-739546">
        <id>Q96PV6</id>
        <label>LENG8</label>
    </interactant>
    <organismsDiffer>false</organismsDiffer>
    <experiments>3</experiments>
</comment>
<comment type="interaction">
    <interactant intactId="EBI-357061">
        <id>Q92734</id>
    </interactant>
    <interactant intactId="EBI-716006">
        <id>Q9Y5V3</id>
        <label>MAGED1</label>
    </interactant>
    <organismsDiffer>false</organismsDiffer>
    <experiments>8</experiments>
</comment>
<comment type="interaction">
    <interactant intactId="EBI-357061">
        <id>Q92734</id>
    </interactant>
    <interactant intactId="EBI-741424">
        <id>Q8NDC0</id>
        <label>MAPK1IP1L</label>
    </interactant>
    <organismsDiffer>false</organismsDiffer>
    <experiments>6</experiments>
</comment>
<comment type="interaction">
    <interactant intactId="EBI-357061">
        <id>Q92734</id>
    </interactant>
    <interactant intactId="EBI-394558">
        <id>Q71SY5</id>
        <label>MED25</label>
    </interactant>
    <organismsDiffer>false</organismsDiffer>
    <experiments>3</experiments>
</comment>
<comment type="interaction">
    <interactant intactId="EBI-357061">
        <id>Q92734</id>
    </interactant>
    <interactant intactId="EBI-8487781">
        <id>Q8N6F8</id>
        <label>METTL27</label>
    </interactant>
    <organismsDiffer>false</organismsDiffer>
    <experiments>3</experiments>
</comment>
<comment type="interaction">
    <interactant intactId="EBI-357061">
        <id>Q92734</id>
    </interactant>
    <interactant intactId="EBI-11599933">
        <id>Q4VC12</id>
        <label>MSS51</label>
    </interactant>
    <organismsDiffer>false</organismsDiffer>
    <experiments>3</experiments>
</comment>
<comment type="interaction">
    <interactant intactId="EBI-357061">
        <id>Q92734</id>
    </interactant>
    <interactant intactId="EBI-748610">
        <id>Q6IA69</id>
        <label>NADSYN1</label>
    </interactant>
    <organismsDiffer>false</organismsDiffer>
    <experiments>3</experiments>
</comment>
<comment type="interaction">
    <interactant intactId="EBI-357061">
        <id>Q92734</id>
    </interactant>
    <interactant intactId="EBI-10261509">
        <id>Q8IV28</id>
        <label>NID2</label>
    </interactant>
    <organismsDiffer>false</organismsDiffer>
    <experiments>3</experiments>
</comment>
<comment type="interaction">
    <interactant intactId="EBI-357061">
        <id>Q92734</id>
    </interactant>
    <interactant intactId="EBI-12813389">
        <id>Q8TDS5</id>
        <label>OXER1</label>
    </interactant>
    <organismsDiffer>false</organismsDiffer>
    <experiments>3</experiments>
</comment>
<comment type="interaction">
    <interactant intactId="EBI-357061">
        <id>Q92734</id>
    </interactant>
    <interactant intactId="EBI-724639">
        <id>Q9UBV8</id>
        <label>PEF1</label>
    </interactant>
    <organismsDiffer>false</organismsDiffer>
    <experiments>6</experiments>
</comment>
<comment type="interaction">
    <interactant intactId="EBI-357061">
        <id>Q92734</id>
    </interactant>
    <interactant intactId="EBI-357275">
        <id>Q99471</id>
        <label>PFDN5</label>
    </interactant>
    <organismsDiffer>false</organismsDiffer>
    <experiments>3</experiments>
</comment>
<comment type="interaction">
    <interactant intactId="EBI-357061">
        <id>Q92734</id>
    </interactant>
    <interactant intactId="EBI-726466">
        <id>O15496</id>
        <label>PLA2G10</label>
    </interactant>
    <organismsDiffer>false</organismsDiffer>
    <experiments>3</experiments>
</comment>
<comment type="interaction">
    <interactant intactId="EBI-357061">
        <id>Q92734</id>
    </interactant>
    <interactant intactId="EBI-949255">
        <id>Q58EX7</id>
        <label>PLEKHG4</label>
    </interactant>
    <organismsDiffer>false</organismsDiffer>
    <experiments>3</experiments>
</comment>
<comment type="interaction">
    <interactant intactId="EBI-357061">
        <id>Q92734</id>
    </interactant>
    <interactant intactId="EBI-740019">
        <id>O15162</id>
        <label>PLSCR1</label>
    </interactant>
    <organismsDiffer>false</organismsDiffer>
    <experiments>2</experiments>
</comment>
<comment type="interaction">
    <interactant intactId="EBI-357061">
        <id>Q92734</id>
    </interactant>
    <interactant intactId="EBI-943588">
        <id>Q16633</id>
        <label>POU2AF1</label>
    </interactant>
    <organismsDiffer>false</organismsDiffer>
    <experiments>3</experiments>
</comment>
<comment type="interaction">
    <interactant intactId="EBI-357061">
        <id>Q92734</id>
    </interactant>
    <interactant intactId="EBI-12754095">
        <id>P86480</id>
        <label>PRR20D</label>
    </interactant>
    <organismsDiffer>false</organismsDiffer>
    <experiments>3</experiments>
</comment>
<comment type="interaction">
    <interactant intactId="EBI-357061">
        <id>Q92734</id>
    </interactant>
    <interactant intactId="EBI-740322">
        <id>Q93062</id>
        <label>RBPMS</label>
    </interactant>
    <organismsDiffer>false</organismsDiffer>
    <experiments>3</experiments>
</comment>
<comment type="interaction">
    <interactant intactId="EBI-357061">
        <id>Q92734</id>
    </interactant>
    <interactant intactId="EBI-2340927">
        <id>P78317</id>
        <label>RNF4</label>
    </interactant>
    <organismsDiffer>false</organismsDiffer>
    <experiments>5</experiments>
</comment>
<comment type="interaction">
    <interactant intactId="EBI-357061">
        <id>Q92734</id>
    </interactant>
    <interactant intactId="EBI-12000762">
        <id>Q7Z5V6-2</id>
        <label>SAXO4</label>
    </interactant>
    <organismsDiffer>false</organismsDiffer>
    <experiments>3</experiments>
</comment>
<comment type="interaction">
    <interactant intactId="EBI-357061">
        <id>Q92734</id>
    </interactant>
    <interactant intactId="EBI-749911">
        <id>O95486</id>
        <label>SEC24A</label>
    </interactant>
    <organismsDiffer>false</organismsDiffer>
    <experiments>3</experiments>
</comment>
<comment type="interaction">
    <interactant intactId="EBI-357061">
        <id>Q92734</id>
    </interactant>
    <interactant intactId="EBI-2462271">
        <id>Q15428</id>
        <label>SF3A2</label>
    </interactant>
    <organismsDiffer>false</organismsDiffer>
    <experiments>3</experiments>
</comment>
<comment type="interaction">
    <interactant intactId="EBI-357061">
        <id>Q92734</id>
    </interactant>
    <interactant intactId="EBI-348469">
        <id>Q15427</id>
        <label>SF3B4</label>
    </interactant>
    <organismsDiffer>false</organismsDiffer>
    <experiments>3</experiments>
</comment>
<comment type="interaction">
    <interactant intactId="EBI-357061">
        <id>Q92734</id>
    </interactant>
    <interactant intactId="EBI-12275818">
        <id>Q53HV7-2</id>
        <label>SMUG1</label>
    </interactant>
    <organismsDiffer>false</organismsDiffer>
    <experiments>3</experiments>
</comment>
<comment type="interaction">
    <interactant intactId="EBI-357061">
        <id>Q92734</id>
    </interactant>
    <interactant intactId="EBI-742688">
        <id>Q9NZD8</id>
        <label>SPG21</label>
    </interactant>
    <organismsDiffer>false</organismsDiffer>
    <experiments>6</experiments>
</comment>
<comment type="interaction">
    <interactant intactId="EBI-357061">
        <id>Q92734</id>
    </interactant>
    <interactant intactId="EBI-743976">
        <id>Q96LM6</id>
        <label>SPMIP9</label>
    </interactant>
    <organismsDiffer>false</organismsDiffer>
    <experiments>3</experiments>
</comment>
<comment type="interaction">
    <interactant intactId="EBI-357061">
        <id>Q92734</id>
    </interactant>
    <interactant intactId="EBI-12843506">
        <id>Q8IWL8</id>
        <label>STH</label>
    </interactant>
    <organismsDiffer>false</organismsDiffer>
    <experiments>3</experiments>
</comment>
<comment type="interaction">
    <interactant intactId="EBI-357061">
        <id>Q92734</id>
    </interactant>
    <interactant intactId="EBI-12096770">
        <id>O60806</id>
        <label>TBX19</label>
    </interactant>
    <organismsDiffer>false</organismsDiffer>
    <experiments>3</experiments>
</comment>
<comment type="interaction">
    <interactant intactId="EBI-357061">
        <id>Q92734</id>
    </interactant>
    <interactant intactId="EBI-357061">
        <id>Q92734</id>
        <label>TFG</label>
    </interactant>
    <organismsDiffer>false</organismsDiffer>
    <experiments>7</experiments>
</comment>
<comment type="interaction">
    <interactant intactId="EBI-357061">
        <id>Q92734</id>
    </interactant>
    <interactant intactId="EBI-2514383">
        <id>Q5T6F2</id>
        <label>UBAP2</label>
    </interactant>
    <organismsDiffer>false</organismsDiffer>
    <experiments>3</experiments>
</comment>
<comment type="interaction">
    <interactant intactId="EBI-357061">
        <id>Q92734</id>
    </interactant>
    <interactant intactId="EBI-10180829">
        <id>Q7KZS0</id>
        <label>UBE2I</label>
    </interactant>
    <organismsDiffer>false</organismsDiffer>
    <experiments>3</experiments>
</comment>
<comment type="interaction">
    <interactant intactId="EBI-357061">
        <id>Q92734</id>
    </interactant>
    <interactant intactId="EBI-2559305">
        <id>A5D8V6</id>
        <label>VPS37C</label>
    </interactant>
    <organismsDiffer>false</organismsDiffer>
    <experiments>6</experiments>
</comment>
<comment type="interaction">
    <interactant intactId="EBI-357061">
        <id>Q92734</id>
    </interactant>
    <interactant intactId="EBI-12040603">
        <id>Q9NZC7-5</id>
        <label>WWOX</label>
    </interactant>
    <organismsDiffer>false</organismsDiffer>
    <experiments>3</experiments>
</comment>
<comment type="interaction">
    <interactant intactId="EBI-357061">
        <id>Q92734</id>
    </interactant>
    <interactant intactId="EBI-17634549">
        <id>Q9UJ78-2</id>
        <label>ZMYM5</label>
    </interactant>
    <organismsDiffer>false</organismsDiffer>
    <experiments>3</experiments>
</comment>
<comment type="subcellular location">
    <subcellularLocation>
        <location evidence="9">Endoplasmic reticulum</location>
    </subcellularLocation>
    <text evidence="5 9">Localizes to endoplasmic reticulum exit site (ERES), also known as transitional endoplasmic reticulum (tER) (PubMed:21478858, PubMed:27813252).</text>
</comment>
<comment type="alternative products">
    <event type="alternative splicing"/>
    <isoform>
        <id>Q92734-1</id>
        <name>1</name>
        <sequence type="displayed"/>
    </isoform>
    <isoform>
        <id>Q92734-2</id>
        <name>2</name>
        <sequence type="described" ref="VSP_047131"/>
    </isoform>
    <isoform>
        <id>Q92734-3</id>
        <name>3</name>
        <sequence type="described" ref="VSP_057414 VSP_057415"/>
    </isoform>
    <isoform>
        <id>Q92734-4</id>
        <name>4</name>
        <sequence type="described" ref="VSP_047131 VSP_057414 VSP_057415"/>
    </isoform>
</comment>
<comment type="tissue specificity">
    <text>Ubiquitous.</text>
</comment>
<comment type="disease">
    <text evidence="11">A chromosomal aberration involving TFG is found in papillary thyroid carcinomas (PTCs). Translocation t(1;3)(q21;q11) with NTRK1. The TFG sequence is fused to the 3'-end of NTRK1 generating the TRKT3 (TRK-T3) fusion transcript.</text>
</comment>
<comment type="disease" evidence="6 9">
    <disease id="DI-03525">
        <name>Neuropathy, hereditary motor and sensory, Okinawa type</name>
        <acronym>HMSNO</acronym>
        <description>A neurodegenerative disorder characterized by young adult onset of proximal muscle weakness and atrophy, muscle cramps, and fasciculations, with later onset of distal sensory impairment. The disorder is slowly progressive and clinically resembles amyotrophic lateral sclerosis.</description>
        <dbReference type="MIM" id="604484"/>
    </disease>
    <text>The disease is caused by variants affecting the gene represented in this entry.</text>
</comment>
<comment type="disease" evidence="7 8 9 10">
    <disease id="DI-04029">
        <name>Spastic paraplegia 57, autosomal recessive</name>
        <acronym>SPG57</acronym>
        <description>A complicated form of spastic paraplegia, a neurodegenerative disorder characterized by a slow, gradual, progressive weakness and spasticity of the lower limbs. Rate of progression and the severity of symptoms are quite variable. Initial symptoms may include difficulty with balance, weakness and stiffness in the legs, muscle spasms, and dragging the toes when walking. Complicated forms are recognized by additional variable features including spastic quadriparesis, seizures, dementia, amyotrophy, extrapyramidal disturbance, cerebral or cerebellar atrophy, optic atrophy, and peripheral neuropathy, as well as by extra neurological manifestations.</description>
        <dbReference type="MIM" id="615658"/>
    </disease>
    <text>The disease is caused by variants affecting the gene represented in this entry.</text>
</comment>
<comment type="online information" name="Atlas of Genetics and Cytogenetics in Oncology and Haematology">
    <link uri="https://atlasgeneticsoncology.org/gene/281/TFG"/>
</comment>
<protein>
    <recommendedName>
        <fullName>Protein TFG</fullName>
    </recommendedName>
    <alternativeName>
        <fullName>TRK-fused gene protein</fullName>
    </alternativeName>
</protein>
<proteinExistence type="evidence at protein level"/>
<organism>
    <name type="scientific">Homo sapiens</name>
    <name type="common">Human</name>
    <dbReference type="NCBI Taxonomy" id="9606"/>
    <lineage>
        <taxon>Eukaryota</taxon>
        <taxon>Metazoa</taxon>
        <taxon>Chordata</taxon>
        <taxon>Craniata</taxon>
        <taxon>Vertebrata</taxon>
        <taxon>Euteleostomi</taxon>
        <taxon>Mammalia</taxon>
        <taxon>Eutheria</taxon>
        <taxon>Euarchontoglires</taxon>
        <taxon>Primates</taxon>
        <taxon>Haplorrhini</taxon>
        <taxon>Catarrhini</taxon>
        <taxon>Hominidae</taxon>
        <taxon>Homo</taxon>
    </lineage>
</organism>
<reference key="1">
    <citation type="journal article" date="1997" name="Genomics">
        <title>Characterization and chromosomal mapping of the human TFG gene involved in thyroid carcinoma.</title>
        <authorList>
            <person name="Mencinger M."/>
            <person name="Panagopoluos I."/>
            <person name="Andreasson P."/>
            <person name="Lassen C."/>
            <person name="Mitelman F."/>
            <person name="Aman P."/>
        </authorList>
    </citation>
    <scope>NUCLEOTIDE SEQUENCE [MRNA] (ISOFORM 1)</scope>
    <source>
        <tissue>Pancreas</tissue>
    </source>
</reference>
<reference key="2">
    <citation type="journal article" date="2012" name="Am. J. Hum. Genet.">
        <title>The TRK-fused gene is mutated in hereditary motor and sensory neuropathy with proximal dominant involvement.</title>
        <authorList>
            <person name="Ishiura H."/>
            <person name="Sako W."/>
            <person name="Yoshida M."/>
            <person name="Kawarai T."/>
            <person name="Tanabe O."/>
            <person name="Goto J."/>
            <person name="Takahashi Y."/>
            <person name="Date H."/>
            <person name="Mitsui J."/>
            <person name="Ahsan B."/>
            <person name="Ichikawa Y."/>
            <person name="Iwata A."/>
            <person name="Yoshino H."/>
            <person name="Izumi Y."/>
            <person name="Fujita K."/>
            <person name="Maeda K."/>
            <person name="Goto S."/>
            <person name="Koizumi H."/>
            <person name="Morigaki R."/>
            <person name="Ikemura M."/>
            <person name="Yamauchi N."/>
            <person name="Murayama S."/>
            <person name="Nicholson G.A."/>
            <person name="Ito H."/>
            <person name="Sobue G."/>
            <person name="Nakagawa M."/>
            <person name="Kaji R."/>
            <person name="Tsuji S."/>
        </authorList>
    </citation>
    <scope>NUCLEOTIDE SEQUENCE [MRNA] (ISOFORMS 3 AND 4)</scope>
    <scope>VARIANT HMSNO LEU-285</scope>
    <scope>ALTERNATIVE SPLICING</scope>
</reference>
<reference key="3">
    <citation type="journal article" date="2004" name="Nat. Genet.">
        <title>Complete sequencing and characterization of 21,243 full-length human cDNAs.</title>
        <authorList>
            <person name="Ota T."/>
            <person name="Suzuki Y."/>
            <person name="Nishikawa T."/>
            <person name="Otsuki T."/>
            <person name="Sugiyama T."/>
            <person name="Irie R."/>
            <person name="Wakamatsu A."/>
            <person name="Hayashi K."/>
            <person name="Sato H."/>
            <person name="Nagai K."/>
            <person name="Kimura K."/>
            <person name="Makita H."/>
            <person name="Sekine M."/>
            <person name="Obayashi M."/>
            <person name="Nishi T."/>
            <person name="Shibahara T."/>
            <person name="Tanaka T."/>
            <person name="Ishii S."/>
            <person name="Yamamoto J."/>
            <person name="Saito K."/>
            <person name="Kawai Y."/>
            <person name="Isono Y."/>
            <person name="Nakamura Y."/>
            <person name="Nagahari K."/>
            <person name="Murakami K."/>
            <person name="Yasuda T."/>
            <person name="Iwayanagi T."/>
            <person name="Wagatsuma M."/>
            <person name="Shiratori A."/>
            <person name="Sudo H."/>
            <person name="Hosoiri T."/>
            <person name="Kaku Y."/>
            <person name="Kodaira H."/>
            <person name="Kondo H."/>
            <person name="Sugawara M."/>
            <person name="Takahashi M."/>
            <person name="Kanda K."/>
            <person name="Yokoi T."/>
            <person name="Furuya T."/>
            <person name="Kikkawa E."/>
            <person name="Omura Y."/>
            <person name="Abe K."/>
            <person name="Kamihara K."/>
            <person name="Katsuta N."/>
            <person name="Sato K."/>
            <person name="Tanikawa M."/>
            <person name="Yamazaki M."/>
            <person name="Ninomiya K."/>
            <person name="Ishibashi T."/>
            <person name="Yamashita H."/>
            <person name="Murakawa K."/>
            <person name="Fujimori K."/>
            <person name="Tanai H."/>
            <person name="Kimata M."/>
            <person name="Watanabe M."/>
            <person name="Hiraoka S."/>
            <person name="Chiba Y."/>
            <person name="Ishida S."/>
            <person name="Ono Y."/>
            <person name="Takiguchi S."/>
            <person name="Watanabe S."/>
            <person name="Yosida M."/>
            <person name="Hotuta T."/>
            <person name="Kusano J."/>
            <person name="Kanehori K."/>
            <person name="Takahashi-Fujii A."/>
            <person name="Hara H."/>
            <person name="Tanase T.-O."/>
            <person name="Nomura Y."/>
            <person name="Togiya S."/>
            <person name="Komai F."/>
            <person name="Hara R."/>
            <person name="Takeuchi K."/>
            <person name="Arita M."/>
            <person name="Imose N."/>
            <person name="Musashino K."/>
            <person name="Yuuki H."/>
            <person name="Oshima A."/>
            <person name="Sasaki N."/>
            <person name="Aotsuka S."/>
            <person name="Yoshikawa Y."/>
            <person name="Matsunawa H."/>
            <person name="Ichihara T."/>
            <person name="Shiohata N."/>
            <person name="Sano S."/>
            <person name="Moriya S."/>
            <person name="Momiyama H."/>
            <person name="Satoh N."/>
            <person name="Takami S."/>
            <person name="Terashima Y."/>
            <person name="Suzuki O."/>
            <person name="Nakagawa S."/>
            <person name="Senoh A."/>
            <person name="Mizoguchi H."/>
            <person name="Goto Y."/>
            <person name="Shimizu F."/>
            <person name="Wakebe H."/>
            <person name="Hishigaki H."/>
            <person name="Watanabe T."/>
            <person name="Sugiyama A."/>
            <person name="Takemoto M."/>
            <person name="Kawakami B."/>
            <person name="Yamazaki M."/>
            <person name="Watanabe K."/>
            <person name="Kumagai A."/>
            <person name="Itakura S."/>
            <person name="Fukuzumi Y."/>
            <person name="Fujimori Y."/>
            <person name="Komiyama M."/>
            <person name="Tashiro H."/>
            <person name="Tanigami A."/>
            <person name="Fujiwara T."/>
            <person name="Ono T."/>
            <person name="Yamada K."/>
            <person name="Fujii Y."/>
            <person name="Ozaki K."/>
            <person name="Hirao M."/>
            <person name="Ohmori Y."/>
            <person name="Kawabata A."/>
            <person name="Hikiji T."/>
            <person name="Kobatake N."/>
            <person name="Inagaki H."/>
            <person name="Ikema Y."/>
            <person name="Okamoto S."/>
            <person name="Okitani R."/>
            <person name="Kawakami T."/>
            <person name="Noguchi S."/>
            <person name="Itoh T."/>
            <person name="Shigeta K."/>
            <person name="Senba T."/>
            <person name="Matsumura K."/>
            <person name="Nakajima Y."/>
            <person name="Mizuno T."/>
            <person name="Morinaga M."/>
            <person name="Sasaki M."/>
            <person name="Togashi T."/>
            <person name="Oyama M."/>
            <person name="Hata H."/>
            <person name="Watanabe M."/>
            <person name="Komatsu T."/>
            <person name="Mizushima-Sugano J."/>
            <person name="Satoh T."/>
            <person name="Shirai Y."/>
            <person name="Takahashi Y."/>
            <person name="Nakagawa K."/>
            <person name="Okumura K."/>
            <person name="Nagase T."/>
            <person name="Nomura N."/>
            <person name="Kikuchi H."/>
            <person name="Masuho Y."/>
            <person name="Yamashita R."/>
            <person name="Nakai K."/>
            <person name="Yada T."/>
            <person name="Nakamura Y."/>
            <person name="Ohara O."/>
            <person name="Isogai T."/>
            <person name="Sugano S."/>
        </authorList>
    </citation>
    <scope>NUCLEOTIDE SEQUENCE [LARGE SCALE MRNA] (ISOFORM 1)</scope>
    <source>
        <tissue>Testis</tissue>
    </source>
</reference>
<reference key="4">
    <citation type="submission" date="2003-05" db="EMBL/GenBank/DDBJ databases">
        <title>Cloning of human full-length CDSs in BD Creator(TM) system donor vector.</title>
        <authorList>
            <person name="Kalnine N."/>
            <person name="Chen X."/>
            <person name="Rolfs A."/>
            <person name="Halleck A."/>
            <person name="Hines L."/>
            <person name="Eisenstein S."/>
            <person name="Koundinya M."/>
            <person name="Raphael J."/>
            <person name="Moreira D."/>
            <person name="Kelley T."/>
            <person name="LaBaer J."/>
            <person name="Lin Y."/>
            <person name="Phelan M."/>
            <person name="Farmer A."/>
        </authorList>
    </citation>
    <scope>NUCLEOTIDE SEQUENCE [LARGE SCALE MRNA] (ISOFORM 1)</scope>
</reference>
<reference key="5">
    <citation type="submission" date="2004-06" db="EMBL/GenBank/DDBJ databases">
        <title>Cloning of human full open reading frames in Gateway(TM) system entry vector (pDONR201).</title>
        <authorList>
            <person name="Ebert L."/>
            <person name="Schick M."/>
            <person name="Neubert P."/>
            <person name="Schatten R."/>
            <person name="Henze S."/>
            <person name="Korn B."/>
        </authorList>
    </citation>
    <scope>NUCLEOTIDE SEQUENCE [LARGE SCALE MRNA] (ISOFORM 1)</scope>
</reference>
<reference key="6">
    <citation type="journal article" date="2006" name="Nature">
        <title>The DNA sequence, annotation and analysis of human chromosome 3.</title>
        <authorList>
            <person name="Muzny D.M."/>
            <person name="Scherer S.E."/>
            <person name="Kaul R."/>
            <person name="Wang J."/>
            <person name="Yu J."/>
            <person name="Sudbrak R."/>
            <person name="Buhay C.J."/>
            <person name="Chen R."/>
            <person name="Cree A."/>
            <person name="Ding Y."/>
            <person name="Dugan-Rocha S."/>
            <person name="Gill R."/>
            <person name="Gunaratne P."/>
            <person name="Harris R.A."/>
            <person name="Hawes A.C."/>
            <person name="Hernandez J."/>
            <person name="Hodgson A.V."/>
            <person name="Hume J."/>
            <person name="Jackson A."/>
            <person name="Khan Z.M."/>
            <person name="Kovar-Smith C."/>
            <person name="Lewis L.R."/>
            <person name="Lozado R.J."/>
            <person name="Metzker M.L."/>
            <person name="Milosavljevic A."/>
            <person name="Miner G.R."/>
            <person name="Morgan M.B."/>
            <person name="Nazareth L.V."/>
            <person name="Scott G."/>
            <person name="Sodergren E."/>
            <person name="Song X.-Z."/>
            <person name="Steffen D."/>
            <person name="Wei S."/>
            <person name="Wheeler D.A."/>
            <person name="Wright M.W."/>
            <person name="Worley K.C."/>
            <person name="Yuan Y."/>
            <person name="Zhang Z."/>
            <person name="Adams C.Q."/>
            <person name="Ansari-Lari M.A."/>
            <person name="Ayele M."/>
            <person name="Brown M.J."/>
            <person name="Chen G."/>
            <person name="Chen Z."/>
            <person name="Clendenning J."/>
            <person name="Clerc-Blankenburg K.P."/>
            <person name="Chen R."/>
            <person name="Chen Z."/>
            <person name="Davis C."/>
            <person name="Delgado O."/>
            <person name="Dinh H.H."/>
            <person name="Dong W."/>
            <person name="Draper H."/>
            <person name="Ernst S."/>
            <person name="Fu G."/>
            <person name="Gonzalez-Garay M.L."/>
            <person name="Garcia D.K."/>
            <person name="Gillett W."/>
            <person name="Gu J."/>
            <person name="Hao B."/>
            <person name="Haugen E."/>
            <person name="Havlak P."/>
            <person name="He X."/>
            <person name="Hennig S."/>
            <person name="Hu S."/>
            <person name="Huang W."/>
            <person name="Jackson L.R."/>
            <person name="Jacob L.S."/>
            <person name="Kelly S.H."/>
            <person name="Kube M."/>
            <person name="Levy R."/>
            <person name="Li Z."/>
            <person name="Liu B."/>
            <person name="Liu J."/>
            <person name="Liu W."/>
            <person name="Lu J."/>
            <person name="Maheshwari M."/>
            <person name="Nguyen B.-V."/>
            <person name="Okwuonu G.O."/>
            <person name="Palmeiri A."/>
            <person name="Pasternak S."/>
            <person name="Perez L.M."/>
            <person name="Phelps K.A."/>
            <person name="Plopper F.J."/>
            <person name="Qiang B."/>
            <person name="Raymond C."/>
            <person name="Rodriguez R."/>
            <person name="Saenphimmachak C."/>
            <person name="Santibanez J."/>
            <person name="Shen H."/>
            <person name="Shen Y."/>
            <person name="Subramanian S."/>
            <person name="Tabor P.E."/>
            <person name="Verduzco D."/>
            <person name="Waldron L."/>
            <person name="Wang J."/>
            <person name="Wang J."/>
            <person name="Wang Q."/>
            <person name="Williams G.A."/>
            <person name="Wong G.K.-S."/>
            <person name="Yao Z."/>
            <person name="Zhang J."/>
            <person name="Zhang X."/>
            <person name="Zhao G."/>
            <person name="Zhou J."/>
            <person name="Zhou Y."/>
            <person name="Nelson D."/>
            <person name="Lehrach H."/>
            <person name="Reinhardt R."/>
            <person name="Naylor S.L."/>
            <person name="Yang H."/>
            <person name="Olson M."/>
            <person name="Weinstock G."/>
            <person name="Gibbs R.A."/>
        </authorList>
    </citation>
    <scope>NUCLEOTIDE SEQUENCE [LARGE SCALE GENOMIC DNA]</scope>
</reference>
<reference key="7">
    <citation type="submission" date="2005-09" db="EMBL/GenBank/DDBJ databases">
        <authorList>
            <person name="Mural R.J."/>
            <person name="Istrail S."/>
            <person name="Sutton G.G."/>
            <person name="Florea L."/>
            <person name="Halpern A.L."/>
            <person name="Mobarry C.M."/>
            <person name="Lippert R."/>
            <person name="Walenz B."/>
            <person name="Shatkay H."/>
            <person name="Dew I."/>
            <person name="Miller J.R."/>
            <person name="Flanigan M.J."/>
            <person name="Edwards N.J."/>
            <person name="Bolanos R."/>
            <person name="Fasulo D."/>
            <person name="Halldorsson B.V."/>
            <person name="Hannenhalli S."/>
            <person name="Turner R."/>
            <person name="Yooseph S."/>
            <person name="Lu F."/>
            <person name="Nusskern D.R."/>
            <person name="Shue B.C."/>
            <person name="Zheng X.H."/>
            <person name="Zhong F."/>
            <person name="Delcher A.L."/>
            <person name="Huson D.H."/>
            <person name="Kravitz S.A."/>
            <person name="Mouchard L."/>
            <person name="Reinert K."/>
            <person name="Remington K.A."/>
            <person name="Clark A.G."/>
            <person name="Waterman M.S."/>
            <person name="Eichler E.E."/>
            <person name="Adams M.D."/>
            <person name="Hunkapiller M.W."/>
            <person name="Myers E.W."/>
            <person name="Venter J.C."/>
        </authorList>
    </citation>
    <scope>NUCLEOTIDE SEQUENCE [LARGE SCALE GENOMIC DNA]</scope>
</reference>
<reference key="8">
    <citation type="journal article" date="2004" name="Genome Res.">
        <title>The status, quality, and expansion of the NIH full-length cDNA project: the Mammalian Gene Collection (MGC).</title>
        <authorList>
            <consortium name="The MGC Project Team"/>
        </authorList>
    </citation>
    <scope>NUCLEOTIDE SEQUENCE [LARGE SCALE MRNA] (ISOFORM 1)</scope>
    <source>
        <tissue>Brain</tissue>
        <tissue>Placenta</tissue>
        <tissue>Uterus</tissue>
    </source>
</reference>
<reference key="9">
    <citation type="journal article" date="1995" name="Mol. Cell. Biol.">
        <title>The DNA rearrangement that generates the TRK-T3 oncogene involves a novel gene on chromosome 3 whose product has a potential coiled-coil domain.</title>
        <authorList>
            <person name="Greco A."/>
            <person name="Mariani C."/>
            <person name="Miranda C."/>
            <person name="Lupas A."/>
            <person name="Pagliardini S."/>
            <person name="Pomati M."/>
            <person name="Pierotti M.A."/>
        </authorList>
    </citation>
    <scope>NUCLEOTIDE SEQUENCE [MRNA] OF 1-193</scope>
    <scope>CHROMOSOMAL TRANSLOCATION WITH NTRK1</scope>
</reference>
<reference key="10">
    <citation type="submission" date="2008-02" db="UniProtKB">
        <authorList>
            <person name="Bienvenut W.V."/>
            <person name="Calvo F."/>
            <person name="Kolch W."/>
        </authorList>
    </citation>
    <scope>PROTEIN SEQUENCE OF 1-10; 15-22; 24-42 AND 48-57</scope>
    <scope>ACETYLATION AT MET-1</scope>
    <scope>IDENTIFICATION BY MASS SPECTROMETRY</scope>
    <source>
        <tissue>Cervix carcinoma</tissue>
    </source>
</reference>
<reference key="11">
    <citation type="journal article" date="2008" name="Proc. Natl. Acad. Sci. U.S.A.">
        <title>A quantitative atlas of mitotic phosphorylation.</title>
        <authorList>
            <person name="Dephoure N."/>
            <person name="Zhou C."/>
            <person name="Villen J."/>
            <person name="Beausoleil S.A."/>
            <person name="Bakalarski C.E."/>
            <person name="Elledge S.J."/>
            <person name="Gygi S.P."/>
        </authorList>
    </citation>
    <scope>PHOSPHORYLATION [LARGE SCALE ANALYSIS] AT SER-197</scope>
    <scope>IDENTIFICATION BY MASS SPECTROMETRY [LARGE SCALE ANALYSIS]</scope>
    <source>
        <tissue>Cervix carcinoma</tissue>
    </source>
</reference>
<reference key="12">
    <citation type="journal article" date="2009" name="Anal. Chem.">
        <title>Lys-N and trypsin cover complementary parts of the phosphoproteome in a refined SCX-based approach.</title>
        <authorList>
            <person name="Gauci S."/>
            <person name="Helbig A.O."/>
            <person name="Slijper M."/>
            <person name="Krijgsveld J."/>
            <person name="Heck A.J."/>
            <person name="Mohammed S."/>
        </authorList>
    </citation>
    <scope>ACETYLATION [LARGE SCALE ANALYSIS] AT MET-1</scope>
    <scope>IDENTIFICATION BY MASS SPECTROMETRY [LARGE SCALE ANALYSIS]</scope>
</reference>
<reference key="13">
    <citation type="journal article" date="2009" name="Sci. Signal.">
        <title>Quantitative phosphoproteomic analysis of T cell receptor signaling reveals system-wide modulation of protein-protein interactions.</title>
        <authorList>
            <person name="Mayya V."/>
            <person name="Lundgren D.H."/>
            <person name="Hwang S.-I."/>
            <person name="Rezaul K."/>
            <person name="Wu L."/>
            <person name="Eng J.K."/>
            <person name="Rodionov V."/>
            <person name="Han D.K."/>
        </authorList>
    </citation>
    <scope>PHOSPHORYLATION [LARGE SCALE ANALYSIS] AT SER-197</scope>
    <scope>IDENTIFICATION BY MASS SPECTROMETRY [LARGE SCALE ANALYSIS]</scope>
    <source>
        <tissue>Leukemic T-cell</tissue>
    </source>
</reference>
<reference key="14">
    <citation type="journal article" date="2011" name="BMC Syst. Biol.">
        <title>Initial characterization of the human central proteome.</title>
        <authorList>
            <person name="Burkard T.R."/>
            <person name="Planyavsky M."/>
            <person name="Kaupe I."/>
            <person name="Breitwieser F.P."/>
            <person name="Buerckstuemmer T."/>
            <person name="Bennett K.L."/>
            <person name="Superti-Furga G."/>
            <person name="Colinge J."/>
        </authorList>
    </citation>
    <scope>IDENTIFICATION BY MASS SPECTROMETRY [LARGE SCALE ANALYSIS]</scope>
</reference>
<reference key="15">
    <citation type="journal article" date="2011" name="Nat. Cell Biol.">
        <title>TFG-1 function in protein secretion and oncogenesis.</title>
        <authorList>
            <person name="Witte K."/>
            <person name="Schuh A.L."/>
            <person name="Hegermann J."/>
            <person name="Sarkeshik A."/>
            <person name="Mayers J.R."/>
            <person name="Schwarze K."/>
            <person name="Yates J.R. III"/>
            <person name="Eimer S."/>
            <person name="Audhya A."/>
        </authorList>
    </citation>
    <scope>FUNCTION</scope>
    <scope>SUBCELLULAR LOCATION</scope>
    <scope>INTERACTION WITH SEC16B</scope>
</reference>
<reference key="16">
    <citation type="journal article" date="2012" name="Mol. Cell. Proteomics">
        <title>Comparative large-scale characterisation of plant vs. mammal proteins reveals similar and idiosyncratic N-alpha acetylation features.</title>
        <authorList>
            <person name="Bienvenut W.V."/>
            <person name="Sumpton D."/>
            <person name="Martinez A."/>
            <person name="Lilla S."/>
            <person name="Espagne C."/>
            <person name="Meinnel T."/>
            <person name="Giglione C."/>
        </authorList>
    </citation>
    <scope>ACETYLATION [LARGE SCALE ANALYSIS] AT MET-1</scope>
    <scope>IDENTIFICATION BY MASS SPECTROMETRY [LARGE SCALE ANALYSIS]</scope>
</reference>
<reference key="17">
    <citation type="journal article" date="2013" name="J. Proteome Res.">
        <title>Toward a comprehensive characterization of a human cancer cell phosphoproteome.</title>
        <authorList>
            <person name="Zhou H."/>
            <person name="Di Palma S."/>
            <person name="Preisinger C."/>
            <person name="Peng M."/>
            <person name="Polat A.N."/>
            <person name="Heck A.J."/>
            <person name="Mohammed S."/>
        </authorList>
    </citation>
    <scope>PHOSPHORYLATION [LARGE SCALE ANALYSIS] AT SER-50 AND SER-197</scope>
    <scope>IDENTIFICATION BY MASS SPECTROMETRY [LARGE SCALE ANALYSIS]</scope>
    <source>
        <tissue>Cervix carcinoma</tissue>
        <tissue>Erythroleukemia</tissue>
    </source>
</reference>
<reference key="18">
    <citation type="journal article" date="2013" name="Proc. Natl. Acad. Sci. U.S.A.">
        <title>Inhibition of TFG function causes hereditary axon degeneration by impairing endoplasmic reticulum structure.</title>
        <authorList>
            <person name="Beetz C."/>
            <person name="Johnson A."/>
            <person name="Schuh A.L."/>
            <person name="Thakur S."/>
            <person name="Varga R.E."/>
            <person name="Fothergill T."/>
            <person name="Hertel N."/>
            <person name="Bomba-Warczak E."/>
            <person name="Thiele H."/>
            <person name="Nurnberg G."/>
            <person name="Altmuller J."/>
            <person name="Saxena R."/>
            <person name="Chapman E.R."/>
            <person name="Dent E.W."/>
            <person name="Nurnberg P."/>
            <person name="Audhya A."/>
        </authorList>
    </citation>
    <scope>FUNCTION</scope>
    <scope>SUBUNIT</scope>
    <scope>VARIANT SPG57 CYS-106</scope>
    <scope>CHARACTERIZATION OF VARIANT SPG57 CYS-106</scope>
</reference>
<reference key="19">
    <citation type="journal article" date="2014" name="J. Proteomics">
        <title>An enzyme assisted RP-RPLC approach for in-depth analysis of human liver phosphoproteome.</title>
        <authorList>
            <person name="Bian Y."/>
            <person name="Song C."/>
            <person name="Cheng K."/>
            <person name="Dong M."/>
            <person name="Wang F."/>
            <person name="Huang J."/>
            <person name="Sun D."/>
            <person name="Wang L."/>
            <person name="Ye M."/>
            <person name="Zou H."/>
        </authorList>
    </citation>
    <scope>PHOSPHORYLATION [LARGE SCALE ANALYSIS] AT SER-197</scope>
    <scope>IDENTIFICATION BY MASS SPECTROMETRY [LARGE SCALE ANALYSIS]</scope>
    <source>
        <tissue>Liver</tissue>
    </source>
</reference>
<reference key="20">
    <citation type="journal article" date="2014" name="Mol. Cell. Proteomics">
        <title>Immunoaffinity enrichment and mass spectrometry analysis of protein methylation.</title>
        <authorList>
            <person name="Guo A."/>
            <person name="Gu H."/>
            <person name="Zhou J."/>
            <person name="Mulhern D."/>
            <person name="Wang Y."/>
            <person name="Lee K.A."/>
            <person name="Yang V."/>
            <person name="Aguiar M."/>
            <person name="Kornhauser J."/>
            <person name="Jia X."/>
            <person name="Ren J."/>
            <person name="Beausoleil S.A."/>
            <person name="Silva J.C."/>
            <person name="Vemulapalli V."/>
            <person name="Bedford M.T."/>
            <person name="Comb M.J."/>
        </authorList>
    </citation>
    <scope>METHYLATION [LARGE SCALE ANALYSIS] AT ARG-385 AND ARG-400</scope>
    <scope>IDENTIFICATION BY MASS SPECTROMETRY [LARGE SCALE ANALYSIS]</scope>
    <source>
        <tissue>Colon carcinoma</tissue>
    </source>
</reference>
<reference key="21">
    <citation type="journal article" date="2006" name="Science">
        <title>The consensus coding sequences of human breast and colorectal cancers.</title>
        <authorList>
            <person name="Sjoeblom T."/>
            <person name="Jones S."/>
            <person name="Wood L.D."/>
            <person name="Parsons D.W."/>
            <person name="Lin J."/>
            <person name="Barber T.D."/>
            <person name="Mandelker D."/>
            <person name="Leary R.J."/>
            <person name="Ptak J."/>
            <person name="Silliman N."/>
            <person name="Szabo S."/>
            <person name="Buckhaults P."/>
            <person name="Farrell C."/>
            <person name="Meeh P."/>
            <person name="Markowitz S.D."/>
            <person name="Willis J."/>
            <person name="Dawson D."/>
            <person name="Willson J.K.V."/>
            <person name="Gazdar A.F."/>
            <person name="Hartigan J."/>
            <person name="Wu L."/>
            <person name="Liu C."/>
            <person name="Parmigiani G."/>
            <person name="Park B.H."/>
            <person name="Bachman K.E."/>
            <person name="Papadopoulos N."/>
            <person name="Vogelstein B."/>
            <person name="Kinzler K.W."/>
            <person name="Velculescu V.E."/>
        </authorList>
    </citation>
    <scope>VARIANT [LARGE SCALE ANALYSIS] SER-149</scope>
</reference>
<reference key="22">
    <citation type="journal article" date="2017" name="FEBS J.">
        <title>The calcium-binding protein ALG-2 promotes endoplasmic reticulum exit site localization and polymerization of Trk-fused gene (TFG) protein.</title>
        <authorList>
            <person name="Kanadome T."/>
            <person name="Shibata H."/>
            <person name="Kuwata K."/>
            <person name="Takahara T."/>
            <person name="Maki M."/>
        </authorList>
    </citation>
    <scope>FUNCTION</scope>
    <scope>SUBCELLULAR LOCATION</scope>
    <scope>INTERACTION WITH PDCD6</scope>
    <scope>CHARACTERIZATION OF VARIANT SPG57 CYS-106</scope>
    <scope>CHARACTERIZATION OF VARIANT HMSNO LEU-285</scope>
</reference>
<reference key="23">
    <citation type="journal article" date="2016" name="Hum. Mutat.">
        <title>Novel genetic, clinical, and pathomechanistic insights into TFG-associated hereditary spastic paraplegia.</title>
        <authorList>
            <person name="Harlalka G.V."/>
            <person name="McEntagart M.E."/>
            <person name="Gupta N."/>
            <person name="Skrzypiec A.E."/>
            <person name="Mucha M.W."/>
            <person name="Chioza B.A."/>
            <person name="Simpson M.A."/>
            <person name="Sreekantan-Nair A."/>
            <person name="Pereira A."/>
            <person name="Guenther S."/>
            <person name="Jahic A."/>
            <person name="Modarres H."/>
            <person name="Moore-Barton H."/>
            <person name="Trembath R.C."/>
            <person name="Kabra M."/>
            <person name="Baple E.L."/>
            <person name="Thakur S."/>
            <person name="Patton M.A."/>
            <person name="Beetz C."/>
            <person name="Pawlak R."/>
            <person name="Crosby A.H."/>
        </authorList>
    </citation>
    <scope>VARIANTS SPG57 CYS-106 AND HIS-106</scope>
    <scope>CHARACTERIZATION OF VARIANTS SPG57 CYS-106 AND HIS-106</scope>
</reference>
<reference key="24">
    <citation type="journal article" date="2019" name="Genet. Med.">
        <title>Autozygome and high throughput confirmation of disease genes candidacy.</title>
        <authorList>
            <person name="Maddirevula S."/>
            <person name="Alzahrani F."/>
            <person name="Al-Owain M."/>
            <person name="Al Muhaizea M.A."/>
            <person name="Kayyali H.R."/>
            <person name="AlHashem A."/>
            <person name="Rahbeeni Z."/>
            <person name="Al-Otaibi M."/>
            <person name="Alzaidan H.I."/>
            <person name="Balobaid A."/>
            <person name="El Khashab H.Y."/>
            <person name="Bubshait D.K."/>
            <person name="Faden M."/>
            <person name="Yamani S.A."/>
            <person name="Dabbagh O."/>
            <person name="Al-Mureikhi M."/>
            <person name="Jasser A.A."/>
            <person name="Alsaif H.S."/>
            <person name="Alluhaydan I."/>
            <person name="Seidahmed M.Z."/>
            <person name="Alabbasi B.H."/>
            <person name="Almogarri I."/>
            <person name="Kurdi W."/>
            <person name="Akleh H."/>
            <person name="Qari A."/>
            <person name="Al Tala S.M."/>
            <person name="Alhomaidi S."/>
            <person name="Kentab A.Y."/>
            <person name="Salih M.A."/>
            <person name="Chedrawi A."/>
            <person name="Alameer S."/>
            <person name="Tabarki B."/>
            <person name="Shamseldin H.E."/>
            <person name="Patel N."/>
            <person name="Ibrahim N."/>
            <person name="Abdulwahab F."/>
            <person name="Samira M."/>
            <person name="Goljan E."/>
            <person name="Abouelhoda M."/>
            <person name="Meyer B.F."/>
            <person name="Hashem M."/>
            <person name="Shaheen R."/>
            <person name="AlShahwan S."/>
            <person name="Alfadhel M."/>
            <person name="Ben-Omran T."/>
            <person name="Al-Qattan M.M."/>
            <person name="Monies D."/>
            <person name="Alkuraya F.S."/>
        </authorList>
    </citation>
    <scope>VARIANT SPG57 PRO-107</scope>
</reference>
<keyword id="KW-0002">3D-structure</keyword>
<keyword id="KW-0007">Acetylation</keyword>
<keyword id="KW-0025">Alternative splicing</keyword>
<keyword id="KW-0160">Chromosomal rearrangement</keyword>
<keyword id="KW-0175">Coiled coil</keyword>
<keyword id="KW-0903">Direct protein sequencing</keyword>
<keyword id="KW-0225">Disease variant</keyword>
<keyword id="KW-0256">Endoplasmic reticulum</keyword>
<keyword id="KW-0931">ER-Golgi transport</keyword>
<keyword id="KW-0890">Hereditary spastic paraplegia</keyword>
<keyword id="KW-0488">Methylation</keyword>
<keyword id="KW-0523">Neurodegeneration</keyword>
<keyword id="KW-0622">Neuropathy</keyword>
<keyword id="KW-0597">Phosphoprotein</keyword>
<keyword id="KW-1267">Proteomics identification</keyword>
<keyword id="KW-0656">Proto-oncogene</keyword>
<keyword id="KW-1185">Reference proteome</keyword>
<keyword id="KW-0813">Transport</keyword>
<name>TFG_HUMAN</name>
<accession>Q92734</accession>
<accession>D3DN49</accession>
<accession>G5E9V1</accession>
<accession>K0J5S8</accession>
<accession>K0J6K2</accession>
<accession>Q15656</accession>
<accession>Q969I2</accession>
<dbReference type="EMBL" id="Y07968">
    <property type="protein sequence ID" value="CAA69264.1"/>
    <property type="molecule type" value="mRNA"/>
</dbReference>
<dbReference type="EMBL" id="AB731569">
    <property type="protein sequence ID" value="BAM48926.1"/>
    <property type="molecule type" value="mRNA"/>
</dbReference>
<dbReference type="EMBL" id="AB731570">
    <property type="protein sequence ID" value="BAM48927.1"/>
    <property type="molecule type" value="mRNA"/>
</dbReference>
<dbReference type="EMBL" id="AK093456">
    <property type="protein sequence ID" value="BAG52721.1"/>
    <property type="molecule type" value="mRNA"/>
</dbReference>
<dbReference type="EMBL" id="BT007428">
    <property type="protein sequence ID" value="AAP36096.1"/>
    <property type="molecule type" value="mRNA"/>
</dbReference>
<dbReference type="EMBL" id="CR456781">
    <property type="protein sequence ID" value="CAG33062.1"/>
    <property type="molecule type" value="mRNA"/>
</dbReference>
<dbReference type="EMBL" id="AC068763">
    <property type="status" value="NOT_ANNOTATED_CDS"/>
    <property type="molecule type" value="Genomic_DNA"/>
</dbReference>
<dbReference type="EMBL" id="KF457659">
    <property type="status" value="NOT_ANNOTATED_CDS"/>
    <property type="molecule type" value="Genomic_DNA"/>
</dbReference>
<dbReference type="EMBL" id="KF457666">
    <property type="status" value="NOT_ANNOTATED_CDS"/>
    <property type="molecule type" value="Genomic_DNA"/>
</dbReference>
<dbReference type="EMBL" id="CH471052">
    <property type="protein sequence ID" value="EAW79813.1"/>
    <property type="molecule type" value="Genomic_DNA"/>
</dbReference>
<dbReference type="EMBL" id="CH471052">
    <property type="protein sequence ID" value="EAW79814.1"/>
    <property type="molecule type" value="Genomic_DNA"/>
</dbReference>
<dbReference type="EMBL" id="CH471052">
    <property type="protein sequence ID" value="EAW79815.1"/>
    <property type="molecule type" value="Genomic_DNA"/>
</dbReference>
<dbReference type="EMBL" id="CH471052">
    <property type="protein sequence ID" value="EAW79816.1"/>
    <property type="molecule type" value="Genomic_DNA"/>
</dbReference>
<dbReference type="EMBL" id="CH471052">
    <property type="protein sequence ID" value="EAW79817.1"/>
    <property type="molecule type" value="Genomic_DNA"/>
</dbReference>
<dbReference type="EMBL" id="BC001483">
    <property type="protein sequence ID" value="AAH01483.1"/>
    <property type="molecule type" value="mRNA"/>
</dbReference>
<dbReference type="EMBL" id="BC009241">
    <property type="protein sequence ID" value="AAH09241.1"/>
    <property type="molecule type" value="mRNA"/>
</dbReference>
<dbReference type="EMBL" id="BC023599">
    <property type="protein sequence ID" value="AAH23599.1"/>
    <property type="molecule type" value="mRNA"/>
</dbReference>
<dbReference type="EMBL" id="X85960">
    <property type="protein sequence ID" value="CAA59936.1"/>
    <property type="status" value="ALT_TERM"/>
    <property type="molecule type" value="mRNA"/>
</dbReference>
<dbReference type="CCDS" id="CCDS2939.1">
    <molecule id="Q92734-1"/>
</dbReference>
<dbReference type="CCDS" id="CCDS56266.1">
    <molecule id="Q92734-2"/>
</dbReference>
<dbReference type="RefSeq" id="NP_001007566.1">
    <molecule id="Q92734-1"/>
    <property type="nucleotide sequence ID" value="NM_001007565.2"/>
</dbReference>
<dbReference type="RefSeq" id="NP_001182407.1">
    <molecule id="Q92734-1"/>
    <property type="nucleotide sequence ID" value="NM_001195478.2"/>
</dbReference>
<dbReference type="RefSeq" id="NP_001182408.1">
    <molecule id="Q92734-2"/>
    <property type="nucleotide sequence ID" value="NM_001195479.2"/>
</dbReference>
<dbReference type="RefSeq" id="NP_006061.2">
    <molecule id="Q92734-1"/>
    <property type="nucleotide sequence ID" value="NM_006070.5"/>
</dbReference>
<dbReference type="RefSeq" id="XP_005247123.1">
    <molecule id="Q92734-2"/>
    <property type="nucleotide sequence ID" value="XM_005247066.3"/>
</dbReference>
<dbReference type="RefSeq" id="XP_006713535.1">
    <molecule id="Q92734-1"/>
    <property type="nucleotide sequence ID" value="XM_006713472.2"/>
</dbReference>
<dbReference type="RefSeq" id="XP_006713536.1">
    <property type="nucleotide sequence ID" value="XM_006713473.1"/>
</dbReference>
<dbReference type="RefSeq" id="XP_011510636.1">
    <molecule id="Q92734-1"/>
    <property type="nucleotide sequence ID" value="XM_011512334.2"/>
</dbReference>
<dbReference type="RefSeq" id="XP_016861016.1">
    <molecule id="Q92734-2"/>
    <property type="nucleotide sequence ID" value="XM_017005527.2"/>
</dbReference>
<dbReference type="RefSeq" id="XP_016861017.1">
    <property type="nucleotide sequence ID" value="XM_017005528.1"/>
</dbReference>
<dbReference type="RefSeq" id="XP_016861018.1">
    <property type="nucleotide sequence ID" value="XM_017005529.1"/>
</dbReference>
<dbReference type="RefSeq" id="XP_016861019.1">
    <property type="nucleotide sequence ID" value="XM_017005530.1"/>
</dbReference>
<dbReference type="RefSeq" id="XP_047303197.1">
    <molecule id="Q92734-1"/>
    <property type="nucleotide sequence ID" value="XM_047447241.1"/>
</dbReference>
<dbReference type="RefSeq" id="XP_047303198.1">
    <molecule id="Q92734-2"/>
    <property type="nucleotide sequence ID" value="XM_047447242.1"/>
</dbReference>
<dbReference type="RefSeq" id="XP_047303199.1">
    <molecule id="Q92734-2"/>
    <property type="nucleotide sequence ID" value="XM_047447243.1"/>
</dbReference>
<dbReference type="RefSeq" id="XP_047303200.1">
    <molecule id="Q92734-2"/>
    <property type="nucleotide sequence ID" value="XM_047447244.1"/>
</dbReference>
<dbReference type="RefSeq" id="XP_054200894.1">
    <molecule id="Q92734-1"/>
    <property type="nucleotide sequence ID" value="XM_054344919.1"/>
</dbReference>
<dbReference type="RefSeq" id="XP_054200895.1">
    <molecule id="Q92734-1"/>
    <property type="nucleotide sequence ID" value="XM_054344920.1"/>
</dbReference>
<dbReference type="RefSeq" id="XP_054200896.1">
    <molecule id="Q92734-1"/>
    <property type="nucleotide sequence ID" value="XM_054344921.1"/>
</dbReference>
<dbReference type="RefSeq" id="XP_054200897.1">
    <molecule id="Q92734-2"/>
    <property type="nucleotide sequence ID" value="XM_054344922.1"/>
</dbReference>
<dbReference type="RefSeq" id="XP_054200898.1">
    <molecule id="Q92734-2"/>
    <property type="nucleotide sequence ID" value="XM_054344923.1"/>
</dbReference>
<dbReference type="RefSeq" id="XP_054200899.1">
    <molecule id="Q92734-2"/>
    <property type="nucleotide sequence ID" value="XM_054344924.1"/>
</dbReference>
<dbReference type="RefSeq" id="XP_054200900.1">
    <molecule id="Q92734-2"/>
    <property type="nucleotide sequence ID" value="XM_054344925.1"/>
</dbReference>
<dbReference type="RefSeq" id="XP_054200901.1">
    <molecule id="Q92734-2"/>
    <property type="nucleotide sequence ID" value="XM_054344926.1"/>
</dbReference>
<dbReference type="PDB" id="8TEQ">
    <property type="method" value="EM"/>
    <property type="resolution" value="2.84 A"/>
    <property type="chains" value="0/1/2/3/A/B/C/D/E/F/G/H/I/J/K/L/M/N/O/P/Q/R/S/T/U/V/W/X/Y/Z=237-327"/>
</dbReference>
<dbReference type="PDB" id="8TER">
    <property type="method" value="EM"/>
    <property type="resolution" value="2.59 A"/>
    <property type="chains" value="A/B/C/D/E/F/G/H/I/J/K/L/M/N/O/P/Q/R/S/T=237-327"/>
</dbReference>
<dbReference type="PDB" id="9E7C">
    <property type="method" value="X-ray"/>
    <property type="resolution" value="1.91 A"/>
    <property type="chains" value="A=1-96"/>
</dbReference>
<dbReference type="PDBsum" id="8TEQ"/>
<dbReference type="PDBsum" id="8TER"/>
<dbReference type="PDBsum" id="9E7C"/>
<dbReference type="EMDB" id="EMD-41195"/>
<dbReference type="EMDB" id="EMD-41198"/>
<dbReference type="SMR" id="Q92734"/>
<dbReference type="BioGRID" id="115624">
    <property type="interactions" value="332"/>
</dbReference>
<dbReference type="CORUM" id="Q92734"/>
<dbReference type="FunCoup" id="Q92734">
    <property type="interactions" value="3559"/>
</dbReference>
<dbReference type="IntAct" id="Q92734">
    <property type="interactions" value="185"/>
</dbReference>
<dbReference type="MINT" id="Q92734"/>
<dbReference type="STRING" id="9606.ENSP00000240851"/>
<dbReference type="MoonDB" id="Q92734">
    <property type="type" value="Predicted"/>
</dbReference>
<dbReference type="GlyCosmos" id="Q92734">
    <property type="glycosylation" value="6 sites, 1 glycan"/>
</dbReference>
<dbReference type="GlyGen" id="Q92734">
    <property type="glycosylation" value="7 sites, 1 O-linked glycan (7 sites)"/>
</dbReference>
<dbReference type="iPTMnet" id="Q92734"/>
<dbReference type="MetOSite" id="Q92734"/>
<dbReference type="PhosphoSitePlus" id="Q92734"/>
<dbReference type="SwissPalm" id="Q92734"/>
<dbReference type="BioMuta" id="TFG"/>
<dbReference type="DMDM" id="223634676"/>
<dbReference type="jPOST" id="Q92734"/>
<dbReference type="MassIVE" id="Q92734"/>
<dbReference type="PaxDb" id="9606-ENSP00000240851"/>
<dbReference type="PeptideAtlas" id="Q92734"/>
<dbReference type="ProteomicsDB" id="34050"/>
<dbReference type="ProteomicsDB" id="75430">
    <molecule id="Q92734-1"/>
</dbReference>
<dbReference type="Pumba" id="Q92734"/>
<dbReference type="Antibodypedia" id="15864">
    <property type="antibodies" value="336 antibodies from 35 providers"/>
</dbReference>
<dbReference type="DNASU" id="10342"/>
<dbReference type="Ensembl" id="ENST00000240851.9">
    <molecule id="Q92734-1"/>
    <property type="protein sequence ID" value="ENSP00000240851.4"/>
    <property type="gene ID" value="ENSG00000114354.15"/>
</dbReference>
<dbReference type="Ensembl" id="ENST00000463568.6">
    <molecule id="Q92734-2"/>
    <property type="protein sequence ID" value="ENSP00000419504.2"/>
    <property type="gene ID" value="ENSG00000114354.15"/>
</dbReference>
<dbReference type="Ensembl" id="ENST00000476228.5">
    <molecule id="Q92734-2"/>
    <property type="protein sequence ID" value="ENSP00000417952.1"/>
    <property type="gene ID" value="ENSG00000114354.15"/>
</dbReference>
<dbReference type="Ensembl" id="ENST00000487505.6">
    <molecule id="Q92734-1"/>
    <property type="protein sequence ID" value="ENSP00000420797.2"/>
    <property type="gene ID" value="ENSG00000114354.15"/>
</dbReference>
<dbReference type="Ensembl" id="ENST00000490574.6">
    <molecule id="Q92734-1"/>
    <property type="protein sequence ID" value="ENSP00000419960.1"/>
    <property type="gene ID" value="ENSG00000114354.15"/>
</dbReference>
<dbReference type="Ensembl" id="ENST00000615993.2">
    <molecule id="Q92734-4"/>
    <property type="protein sequence ID" value="ENSP00000479269.2"/>
    <property type="gene ID" value="ENSG00000114354.15"/>
</dbReference>
<dbReference type="Ensembl" id="ENST00000620299.5">
    <molecule id="Q92734-3"/>
    <property type="protein sequence ID" value="ENSP00000479981.1"/>
    <property type="gene ID" value="ENSG00000114354.15"/>
</dbReference>
<dbReference type="Ensembl" id="ENST00000674615.1">
    <molecule id="Q92734-1"/>
    <property type="protein sequence ID" value="ENSP00000502734.1"/>
    <property type="gene ID" value="ENSG00000114354.15"/>
</dbReference>
<dbReference type="Ensembl" id="ENST00000674645.1">
    <molecule id="Q92734-2"/>
    <property type="protein sequence ID" value="ENSP00000501892.1"/>
    <property type="gene ID" value="ENSG00000114354.15"/>
</dbReference>
<dbReference type="Ensembl" id="ENST00000674758.1">
    <molecule id="Q92734-2"/>
    <property type="protein sequence ID" value="ENSP00000502502.1"/>
    <property type="gene ID" value="ENSG00000114354.15"/>
</dbReference>
<dbReference type="Ensembl" id="ENST00000675047.1">
    <molecule id="Q92734-2"/>
    <property type="protein sequence ID" value="ENSP00000502497.1"/>
    <property type="gene ID" value="ENSG00000114354.15"/>
</dbReference>
<dbReference type="Ensembl" id="ENST00000675243.1">
    <molecule id="Q92734-1"/>
    <property type="protein sequence ID" value="ENSP00000502592.1"/>
    <property type="gene ID" value="ENSG00000114354.15"/>
</dbReference>
<dbReference type="Ensembl" id="ENST00000675420.1">
    <molecule id="Q92734-2"/>
    <property type="protein sequence ID" value="ENSP00000502516.1"/>
    <property type="gene ID" value="ENSG00000114354.15"/>
</dbReference>
<dbReference type="Ensembl" id="ENST00000675499.1">
    <molecule id="Q92734-1"/>
    <property type="protein sequence ID" value="ENSP00000502450.1"/>
    <property type="gene ID" value="ENSG00000114354.15"/>
</dbReference>
<dbReference type="Ensembl" id="ENST00000675543.1">
    <molecule id="Q92734-3"/>
    <property type="protein sequence ID" value="ENSP00000502229.1"/>
    <property type="gene ID" value="ENSG00000114354.15"/>
</dbReference>
<dbReference type="Ensembl" id="ENST00000675553.1">
    <molecule id="Q92734-1"/>
    <property type="protein sequence ID" value="ENSP00000501815.1"/>
    <property type="gene ID" value="ENSG00000114354.15"/>
</dbReference>
<dbReference type="Ensembl" id="ENST00000675586.1">
    <molecule id="Q92734-4"/>
    <property type="protein sequence ID" value="ENSP00000502329.1"/>
    <property type="gene ID" value="ENSG00000114354.15"/>
</dbReference>
<dbReference type="Ensembl" id="ENST00000676111.1">
    <molecule id="Q92734-4"/>
    <property type="protein sequence ID" value="ENSP00000502139.1"/>
    <property type="gene ID" value="ENSG00000114354.15"/>
</dbReference>
<dbReference type="Ensembl" id="ENST00000676308.1">
    <molecule id="Q92734-4"/>
    <property type="protein sequence ID" value="ENSP00000502697.1"/>
    <property type="gene ID" value="ENSG00000114354.15"/>
</dbReference>
<dbReference type="Ensembl" id="ENST00000676395.1">
    <molecule id="Q92734-1"/>
    <property type="protein sequence ID" value="ENSP00000502071.1"/>
    <property type="gene ID" value="ENSG00000114354.15"/>
</dbReference>
<dbReference type="Ensembl" id="ENST00000676431.1">
    <molecule id="Q92734-2"/>
    <property type="protein sequence ID" value="ENSP00000502698.1"/>
    <property type="gene ID" value="ENSG00000114354.15"/>
</dbReference>
<dbReference type="GeneID" id="10342"/>
<dbReference type="KEGG" id="hsa:10342"/>
<dbReference type="MANE-Select" id="ENST00000240851.9">
    <property type="protein sequence ID" value="ENSP00000240851.4"/>
    <property type="RefSeq nucleotide sequence ID" value="NM_006070.6"/>
    <property type="RefSeq protein sequence ID" value="NP_006061.2"/>
</dbReference>
<dbReference type="UCSC" id="uc003due.4">
    <molecule id="Q92734-1"/>
    <property type="organism name" value="human"/>
</dbReference>
<dbReference type="UCSC" id="uc031sau.2">
    <property type="organism name" value="human"/>
</dbReference>
<dbReference type="AGR" id="HGNC:11758"/>
<dbReference type="CTD" id="10342"/>
<dbReference type="DisGeNET" id="10342"/>
<dbReference type="GeneCards" id="TFG"/>
<dbReference type="HGNC" id="HGNC:11758">
    <property type="gene designation" value="TFG"/>
</dbReference>
<dbReference type="HPA" id="ENSG00000114354">
    <property type="expression patterns" value="Low tissue specificity"/>
</dbReference>
<dbReference type="MalaCards" id="TFG"/>
<dbReference type="MIM" id="602498">
    <property type="type" value="gene"/>
</dbReference>
<dbReference type="MIM" id="604484">
    <property type="type" value="phenotype"/>
</dbReference>
<dbReference type="MIM" id="615658">
    <property type="type" value="phenotype"/>
</dbReference>
<dbReference type="neXtProt" id="NX_Q92734"/>
<dbReference type="OpenTargets" id="ENSG00000114354"/>
<dbReference type="Orphanet" id="435819">
    <property type="disease" value="Autosomal dominant Charcot-Marie-Tooth disease type 2 due to TFG mutation"/>
</dbReference>
<dbReference type="Orphanet" id="431329">
    <property type="disease" value="Autosomal recessive spastic paraplegia type 57"/>
</dbReference>
<dbReference type="Orphanet" id="146">
    <property type="disease" value="Differentiated thyroid carcinoma"/>
</dbReference>
<dbReference type="Orphanet" id="209916">
    <property type="disease" value="Extraskeletal myxoid chondrosarcoma"/>
</dbReference>
<dbReference type="Orphanet" id="90117">
    <property type="disease" value="Hereditary motor and sensory neuropathy, Okinawa type"/>
</dbReference>
<dbReference type="PharmGKB" id="PA36473"/>
<dbReference type="VEuPathDB" id="HostDB:ENSG00000114354"/>
<dbReference type="eggNOG" id="ENOG502QR6R">
    <property type="taxonomic scope" value="Eukaryota"/>
</dbReference>
<dbReference type="GeneTree" id="ENSGT00510000047809"/>
<dbReference type="HOGENOM" id="CLU_058059_2_0_1"/>
<dbReference type="InParanoid" id="Q92734"/>
<dbReference type="OMA" id="SEYRFGM"/>
<dbReference type="OrthoDB" id="1594986at2759"/>
<dbReference type="PAN-GO" id="Q92734">
    <property type="GO annotations" value="2 GO annotations based on evolutionary models"/>
</dbReference>
<dbReference type="PhylomeDB" id="Q92734"/>
<dbReference type="TreeFam" id="TF318743"/>
<dbReference type="PathwayCommons" id="Q92734"/>
<dbReference type="Reactome" id="R-HSA-204005">
    <property type="pathway name" value="COPII-mediated vesicle transport"/>
</dbReference>
<dbReference type="Reactome" id="R-HSA-9725370">
    <property type="pathway name" value="Signaling by ALK fusions and activated point mutants"/>
</dbReference>
<dbReference type="SignaLink" id="Q92734"/>
<dbReference type="SIGNOR" id="Q92734"/>
<dbReference type="BioGRID-ORCS" id="10342">
    <property type="hits" value="47 hits in 1155 CRISPR screens"/>
</dbReference>
<dbReference type="CD-CODE" id="1EF72FBA">
    <property type="entry name" value="ERES"/>
</dbReference>
<dbReference type="ChiTaRS" id="TFG">
    <property type="organism name" value="human"/>
</dbReference>
<dbReference type="GeneWiki" id="TFG_(gene)"/>
<dbReference type="GenomeRNAi" id="10342"/>
<dbReference type="Pharos" id="Q92734">
    <property type="development level" value="Tbio"/>
</dbReference>
<dbReference type="PRO" id="PR:Q92734"/>
<dbReference type="Proteomes" id="UP000005640">
    <property type="component" value="Chromosome 3"/>
</dbReference>
<dbReference type="RNAct" id="Q92734">
    <property type="molecule type" value="protein"/>
</dbReference>
<dbReference type="Bgee" id="ENSG00000114354">
    <property type="expression patterns" value="Expressed in secondary oocyte and 196 other cell types or tissues"/>
</dbReference>
<dbReference type="ExpressionAtlas" id="Q92734">
    <property type="expression patterns" value="baseline and differential"/>
</dbReference>
<dbReference type="GO" id="GO:0005737">
    <property type="term" value="C:cytoplasm"/>
    <property type="evidence" value="ECO:0000303"/>
    <property type="project" value="UniProtKB"/>
</dbReference>
<dbReference type="GO" id="GO:0005829">
    <property type="term" value="C:cytosol"/>
    <property type="evidence" value="ECO:0000314"/>
    <property type="project" value="HPA"/>
</dbReference>
<dbReference type="GO" id="GO:0070971">
    <property type="term" value="C:endoplasmic reticulum exit site"/>
    <property type="evidence" value="ECO:0000314"/>
    <property type="project" value="UniProtKB"/>
</dbReference>
<dbReference type="GO" id="GO:0043231">
    <property type="term" value="C:intracellular membrane-bounded organelle"/>
    <property type="evidence" value="ECO:0000314"/>
    <property type="project" value="HPA"/>
</dbReference>
<dbReference type="GO" id="GO:0042802">
    <property type="term" value="F:identical protein binding"/>
    <property type="evidence" value="ECO:0000353"/>
    <property type="project" value="IntAct"/>
</dbReference>
<dbReference type="GO" id="GO:0048208">
    <property type="term" value="P:COPII vesicle coating"/>
    <property type="evidence" value="ECO:0007669"/>
    <property type="project" value="InterPro"/>
</dbReference>
<dbReference type="GO" id="GO:0006888">
    <property type="term" value="P:endoplasmic reticulum to Golgi vesicle-mediated transport"/>
    <property type="evidence" value="ECO:0000315"/>
    <property type="project" value="UniProtKB"/>
</dbReference>
<dbReference type="GO" id="GO:0043123">
    <property type="term" value="P:positive regulation of canonical NF-kappaB signal transduction"/>
    <property type="evidence" value="ECO:0007001"/>
    <property type="project" value="UniProtKB"/>
</dbReference>
<dbReference type="CDD" id="cd06401">
    <property type="entry name" value="PB1_TFG"/>
    <property type="match status" value="1"/>
</dbReference>
<dbReference type="FunFam" id="3.10.20.90:FF:000045">
    <property type="entry name" value="TFG isoform 1"/>
    <property type="match status" value="1"/>
</dbReference>
<dbReference type="Gene3D" id="3.10.20.90">
    <property type="entry name" value="Phosphatidylinositol 3-kinase Catalytic Subunit, Chain A, domain 1"/>
    <property type="match status" value="1"/>
</dbReference>
<dbReference type="InterPro" id="IPR053793">
    <property type="entry name" value="PB1-like"/>
</dbReference>
<dbReference type="InterPro" id="IPR000270">
    <property type="entry name" value="PB1_dom"/>
</dbReference>
<dbReference type="InterPro" id="IPR034857">
    <property type="entry name" value="PB1_TFG"/>
</dbReference>
<dbReference type="InterPro" id="IPR033512">
    <property type="entry name" value="TFG"/>
</dbReference>
<dbReference type="PANTHER" id="PTHR15335">
    <property type="entry name" value="PROTEIN TFG"/>
    <property type="match status" value="1"/>
</dbReference>
<dbReference type="PANTHER" id="PTHR15335:SF7">
    <property type="entry name" value="PROTEIN TFG"/>
    <property type="match status" value="1"/>
</dbReference>
<dbReference type="Pfam" id="PF00564">
    <property type="entry name" value="PB1"/>
    <property type="match status" value="1"/>
</dbReference>
<dbReference type="SMART" id="SM00666">
    <property type="entry name" value="PB1"/>
    <property type="match status" value="1"/>
</dbReference>
<dbReference type="SUPFAM" id="SSF54277">
    <property type="entry name" value="CAD &amp; PB1 domains"/>
    <property type="match status" value="1"/>
</dbReference>
<dbReference type="PROSITE" id="PS51745">
    <property type="entry name" value="PB1"/>
    <property type="match status" value="1"/>
</dbReference>
<sequence>MNGQLDLSGKLIIKAQLGEDIRRIPIHNEDITYDELVLMMQRVFRGKLLSNDEVTIKYKDEDGDLITIFDSSDLSFAIQCSRILKLTLFVNGQPRPLESSQVKYLRRELIELRNKVNRLLDSLEPPGEPGPSTNIPENDTVDGREEKSASDSSGKQSTQVMAASMSAFDPLKNQDEINKNVMSAFGLTDDQVSGPPSAPAEDRSGTPDSIASSSSAAHPPGVQPQQPPYTGAQTQAGQIEGQMYQQYQQQAGYGAQQPQAPPQQPQQYGIQYSASYSQQTGPQQPQQFQGYGQQPTSQAPAPAFSGQPQQLPAQPPQQYQASNYPAQTYTAQTSQPTNYTVAPASQPGMAPSQPGAYQPRPGFTSLPGSTMTPPPSGPNPYARNRPPFGQGYTQPGPGYR</sequence>